<name>PG056_MONPV</name>
<keyword id="KW-0244">Early protein</keyword>
<keyword id="KW-1039">Host endosome</keyword>
<keyword id="KW-0945">Host-virus interaction</keyword>
<keyword id="KW-0472">Membrane</keyword>
<keyword id="KW-1189">Microtubular outwards viral transport</keyword>
<keyword id="KW-1185">Reference proteome</keyword>
<keyword id="KW-1188">Viral release from host cell</keyword>
<keyword id="KW-0946">Virion</keyword>
<keyword id="KW-0843">Virulence</keyword>
<proteinExistence type="inferred from homology"/>
<comment type="function">
    <text evidence="1">Plays a role in intracellular enveloped virus (IEV) transport to the cell surface through microtubule transport. Together with protein OPG064, forms a complex that interacts with host KLC2 (kinesin light chain isoform 2) to engage the kinesin-1 complex and thereby promote IEV trafficking.</text>
</comment>
<comment type="subunit">
    <text evidence="1">Interacts with protein OPG164. Interacts with protein OPG064.</text>
</comment>
<comment type="subcellular location">
    <subcellularLocation>
        <location evidence="1">Virion membrane</location>
    </subcellularLocation>
    <subcellularLocation>
        <location evidence="1">Host endosome</location>
    </subcellularLocation>
    <text evidence="1">Associates with the membrane of IEV particles, but not intracellular mature virus (IMV), cell-associated enveloped virus (CEV) or EEV. Colocalizes with microtubules.</text>
</comment>
<comment type="induction">
    <text evidence="1">Expressed in the early phase of the viral replicative cycle.</text>
</comment>
<comment type="similarity">
    <text evidence="2">Belongs to the orthopoxvirus OPG056 family.</text>
</comment>
<feature type="chain" id="PRO_0000457649" description="Protein OPG056">
    <location>
        <begin position="1"/>
        <end position="635"/>
    </location>
</feature>
<reference key="1">
    <citation type="journal article" date="2022" name="J. Infect. Dis.">
        <title>Exportation of Monkeypox virus from the African continent.</title>
        <authorList>
            <person name="Mauldin M.R."/>
            <person name="McCollum A.M."/>
            <person name="Nakazawa Y.J."/>
            <person name="Mandra A."/>
            <person name="Whitehouse E.R."/>
            <person name="Davidson W."/>
            <person name="Zhao H."/>
            <person name="Gao J."/>
            <person name="Li Y."/>
            <person name="Doty J."/>
            <person name="Yinka-Ogunleye A."/>
            <person name="Akinpelu A."/>
            <person name="Aruna O."/>
            <person name="Naidoo D."/>
            <person name="Lewandowski K."/>
            <person name="Afrough B."/>
            <person name="Graham V."/>
            <person name="Aarons E."/>
            <person name="Hewson R."/>
            <person name="Vipond R."/>
            <person name="Dunning J."/>
            <person name="Chand M."/>
            <person name="Brown C."/>
            <person name="Cohen-Gihon I."/>
            <person name="Erez N."/>
            <person name="Shifman O."/>
            <person name="Israeli O."/>
            <person name="Sharon M."/>
            <person name="Schwartz E."/>
            <person name="Beth-Din A."/>
            <person name="Zvi A."/>
            <person name="Mak T.M."/>
            <person name="Ng Y.K."/>
            <person name="Cui L."/>
            <person name="Lin R.T.P."/>
            <person name="Olson V.A."/>
            <person name="Brooks T."/>
            <person name="Paran N."/>
            <person name="Ihekweazu C."/>
            <person name="Reynolds M.G."/>
        </authorList>
    </citation>
    <scope>NUCLEOTIDE SEQUENCE [LARGE SCALE GENOMIC DNA]</scope>
    <source>
        <strain>MPXV-M5312_HM12_Rivers</strain>
    </source>
</reference>
<evidence type="ECO:0000250" key="1">
    <source>
        <dbReference type="UniProtKB" id="Q80HX6"/>
    </source>
</evidence>
<evidence type="ECO:0000305" key="2"/>
<sequence length="635" mass="73237">MLNRIQTLMKTANNYETIEILRNYLRLYIILARNEEGRGILIYDDNIDSVMSMMNITILEVIGLTHCTKLRSSPPIPMSRLFMDEIDHESYYSPKTSYYPLIDIIRKRSHEQGDIALALERYGIENTDSISEINEWLSSKGLACYRFVKFNDYRKQQMYRKFSRYTIVDSMIIGHIGHHYIWIKNLETYTRPEIDVLPFDIKCISRDELWARISSSLDQTHIKTIAVSVYGAITDNGPIPYMISTYPGNTFVNFNSVKDLILDFLDWIKDIMTSTRTIILVGYMSNLFDIPLLTVYWPNNCGWKIYNNTLISSDGARVIWMDVYKFSCGLSLQDYCYHWGSKPESRPFDLIKKSDAKRNTKSLVKESMASLKSLYEAFETQSGALEVLMSPCRMFSFSRIEDMFLTSVINRVSENTGMGMYYPTNDIPSLFIESSICLDYIIVNNQESNKYRIKSVLDIISSKQYPAGRPNYVKNGTKGKLYIALCKVTVPTNDHIPVVYHDDDNTTTFITVLTSVDIETAIRAGYSIVELGALQWDDNIPELKDCLLDSIKIIYDLNAVTTNNLLEQLIENINFNNSSIISLFYTFAISYCRAFIYSIMETIDPVYISQFSYKELYVSSSCKDINESMSQMVKL</sequence>
<organismHost>
    <name type="scientific">Cynomys gunnisoni</name>
    <name type="common">Gunnison's prairie dog</name>
    <name type="synonym">Spermophilus gunnisoni</name>
    <dbReference type="NCBI Taxonomy" id="45479"/>
</organismHost>
<organismHost>
    <name type="scientific">Cynomys leucurus</name>
    <name type="common">White-tailed prairie dog</name>
    <dbReference type="NCBI Taxonomy" id="99825"/>
</organismHost>
<organismHost>
    <name type="scientific">Cynomys ludovicianus</name>
    <name type="common">Black-tailed prairie dog</name>
    <dbReference type="NCBI Taxonomy" id="45480"/>
</organismHost>
<organismHost>
    <name type="scientific">Cynomys mexicanus</name>
    <name type="common">Mexican prairie dog</name>
    <dbReference type="NCBI Taxonomy" id="99826"/>
</organismHost>
<organismHost>
    <name type="scientific">Cynomys parvidens</name>
    <name type="common">Utah prairie dog</name>
    <dbReference type="NCBI Taxonomy" id="99827"/>
</organismHost>
<organismHost>
    <name type="scientific">Gliridae</name>
    <name type="common">dormice</name>
    <dbReference type="NCBI Taxonomy" id="30650"/>
</organismHost>
<organismHost>
    <name type="scientific">Heliosciurus ruwenzorii</name>
    <name type="common">Ruwenzori sun squirrel</name>
    <dbReference type="NCBI Taxonomy" id="226685"/>
</organismHost>
<organismHost>
    <name type="scientific">Homo sapiens</name>
    <name type="common">Human</name>
    <dbReference type="NCBI Taxonomy" id="9606"/>
</organismHost>
<organismHost>
    <name type="scientific">Mus musculus</name>
    <name type="common">Mouse</name>
    <dbReference type="NCBI Taxonomy" id="10090"/>
</organismHost>
<dbReference type="EMBL" id="MT903340">
    <property type="protein sequence ID" value="QNP12912.1"/>
    <property type="molecule type" value="Genomic_DNA"/>
</dbReference>
<dbReference type="RefSeq" id="YP_010377039.1">
    <property type="nucleotide sequence ID" value="NC_063383.1"/>
</dbReference>
<dbReference type="GeneID" id="72551452"/>
<dbReference type="Proteomes" id="UP000516359">
    <property type="component" value="Genome"/>
</dbReference>
<dbReference type="GO" id="GO:0043657">
    <property type="term" value="C:host cell"/>
    <property type="evidence" value="ECO:0007669"/>
    <property type="project" value="GOC"/>
</dbReference>
<dbReference type="GO" id="GO:0044174">
    <property type="term" value="C:host cell endosome"/>
    <property type="evidence" value="ECO:0007669"/>
    <property type="project" value="UniProtKB-SubCell"/>
</dbReference>
<dbReference type="GO" id="GO:0016020">
    <property type="term" value="C:membrane"/>
    <property type="evidence" value="ECO:0007669"/>
    <property type="project" value="UniProtKB-KW"/>
</dbReference>
<dbReference type="GO" id="GO:0055036">
    <property type="term" value="C:virion membrane"/>
    <property type="evidence" value="ECO:0007669"/>
    <property type="project" value="UniProtKB-SubCell"/>
</dbReference>
<dbReference type="GO" id="GO:0039701">
    <property type="term" value="P:microtubule-dependent intracellular transport of viral material towards cell periphery"/>
    <property type="evidence" value="ECO:0007669"/>
    <property type="project" value="UniProtKB-KW"/>
</dbReference>
<dbReference type="InterPro" id="IPR005005">
    <property type="entry name" value="Poxvirus_F12L"/>
</dbReference>
<dbReference type="InterPro" id="IPR012337">
    <property type="entry name" value="RNaseH-like_sf"/>
</dbReference>
<dbReference type="Pfam" id="PF03337">
    <property type="entry name" value="Pox_F12L"/>
    <property type="match status" value="1"/>
</dbReference>
<dbReference type="PIRSF" id="PIRSF015793">
    <property type="entry name" value="VAC_EEV"/>
    <property type="match status" value="1"/>
</dbReference>
<dbReference type="SUPFAM" id="SSF53098">
    <property type="entry name" value="Ribonuclease H-like"/>
    <property type="match status" value="1"/>
</dbReference>
<gene>
    <name type="primary">OPG056</name>
    <name type="ORF">MPXVgp044</name>
</gene>
<accession>A0A7H0DN29</accession>
<organism>
    <name type="scientific">Monkeypox virus</name>
    <dbReference type="NCBI Taxonomy" id="10244"/>
    <lineage>
        <taxon>Viruses</taxon>
        <taxon>Varidnaviria</taxon>
        <taxon>Bamfordvirae</taxon>
        <taxon>Nucleocytoviricota</taxon>
        <taxon>Pokkesviricetes</taxon>
        <taxon>Chitovirales</taxon>
        <taxon>Poxviridae</taxon>
        <taxon>Chordopoxvirinae</taxon>
        <taxon>Orthopoxvirus</taxon>
    </lineage>
</organism>
<protein>
    <recommendedName>
        <fullName>Protein OPG056</fullName>
    </recommendedName>
</protein>